<comment type="function">
    <text>Has broad substrate specificity including hydrolysis of phosphatidylcholine with phospholipase A2 (EC 3.1.1.4) and phospholipase A1 (EC 3.1.1.32) activities. Strong expression leads to outer membrane breakdown and cell death; is dormant in normal growing cells. Required for efficient secretion of bacteriocins.</text>
</comment>
<comment type="catalytic activity">
    <reaction>
        <text>a 1,2-diacyl-sn-glycero-3-phosphocholine + H2O = a 2-acyl-sn-glycero-3-phosphocholine + a fatty acid + H(+)</text>
        <dbReference type="Rhea" id="RHEA:18689"/>
        <dbReference type="ChEBI" id="CHEBI:15377"/>
        <dbReference type="ChEBI" id="CHEBI:15378"/>
        <dbReference type="ChEBI" id="CHEBI:28868"/>
        <dbReference type="ChEBI" id="CHEBI:57643"/>
        <dbReference type="ChEBI" id="CHEBI:57875"/>
        <dbReference type="EC" id="3.1.1.32"/>
    </reaction>
</comment>
<comment type="catalytic activity">
    <reaction>
        <text>a 1,2-diacyl-sn-glycero-3-phosphocholine + H2O = a 1-acyl-sn-glycero-3-phosphocholine + a fatty acid + H(+)</text>
        <dbReference type="Rhea" id="RHEA:15801"/>
        <dbReference type="ChEBI" id="CHEBI:15377"/>
        <dbReference type="ChEBI" id="CHEBI:15378"/>
        <dbReference type="ChEBI" id="CHEBI:28868"/>
        <dbReference type="ChEBI" id="CHEBI:57643"/>
        <dbReference type="ChEBI" id="CHEBI:58168"/>
        <dbReference type="EC" id="3.1.1.4"/>
    </reaction>
</comment>
<comment type="cofactor">
    <cofactor evidence="2">
        <name>Ca(2+)</name>
        <dbReference type="ChEBI" id="CHEBI:29108"/>
    </cofactor>
    <text evidence="2">Binds 1 Ca(2+) ion per monomer. In the dimeric form the Ca(2+) is bound by different amino acids with binding of each Ca(2+) shared with ligands coming from each monomer (Arg-167 and Ser-172 from 1 monomer, Ser-126 of the other). The Ca(2+) ion may have a role in catalysis.</text>
</comment>
<comment type="activity regulation">
    <text evidence="1 8">By membrane damage, for example, by phage-induced lysis or temperature shock. The protein is inactive in the monomeric form and active in the dimeric form; calcium is essential for dimer stability.</text>
</comment>
<comment type="subunit">
    <text evidence="1 2 8">Homodimer; dimerization is reversible, and the dimeric form is the active one.</text>
</comment>
<comment type="subcellular location">
    <subcellularLocation>
        <location evidence="4">Cell outer membrane</location>
        <topology evidence="4">Multi-pass membrane protein</topology>
    </subcellularLocation>
    <text>One of the very few enzymes located there.</text>
</comment>
<comment type="similarity">
    <text evidence="9">Belongs to the phospholipase A1 family.</text>
</comment>
<sequence>MRTLQGWLLPVFMLPMAVYAQEATVKEVHDAPAVRGSIIANMLQEHDNPFTLYPYDTNYLIYTQTSDLNKEAIASYDWAENARKDEVKFQLSLAFPLWRGILGPNSVLGASYTQKSWWQLSNSEESSPFRETNYEPQLFLGFATDYRFAGWTLRDVEMGYNHDSNGRSDPTSRSWNRLYTRLMAENGNWLVEVKPWYVVGNTDDNPDITKYMGYYQLKIGYHLGDAVLSAKGQYNWNTGYGGAELGLSYPITKHVRLYTQVYSGYGESLIDYNFNQTRVGVGVMLNDLF</sequence>
<protein>
    <recommendedName>
        <fullName>Phospholipase A1</fullName>
        <ecNumber>3.1.1.32</ecNumber>
        <ecNumber>3.1.1.4</ecNumber>
    </recommendedName>
    <alternativeName>
        <fullName>Detergent-resistant phospholipase A</fullName>
        <shortName>DR-phospholipase A</shortName>
    </alternativeName>
    <alternativeName>
        <fullName>Outer membrane phospholipase A</fullName>
        <shortName>OM PLA</shortName>
        <shortName>OMPLA</shortName>
    </alternativeName>
    <alternativeName>
        <fullName>Phosphatidylcholine 1-acylhydrolase</fullName>
    </alternativeName>
</protein>
<proteinExistence type="evidence at protein level"/>
<accession>P0A921</accession>
<accession>P00631</accession>
<accession>Q2M8C6</accession>
<dbReference type="EC" id="3.1.1.32"/>
<dbReference type="EC" id="3.1.1.4"/>
<dbReference type="EMBL" id="X02143">
    <property type="protein sequence ID" value="CAA26081.1"/>
    <property type="molecule type" value="Genomic_DNA"/>
</dbReference>
<dbReference type="EMBL" id="M87049">
    <property type="protein sequence ID" value="AAA67617.1"/>
    <property type="molecule type" value="Genomic_DNA"/>
</dbReference>
<dbReference type="EMBL" id="U00096">
    <property type="protein sequence ID" value="AAC76824.1"/>
    <property type="molecule type" value="Genomic_DNA"/>
</dbReference>
<dbReference type="EMBL" id="AP009048">
    <property type="protein sequence ID" value="BAE77480.1"/>
    <property type="molecule type" value="Genomic_DNA"/>
</dbReference>
<dbReference type="EMBL" id="M30198">
    <property type="protein sequence ID" value="AAA24516.1"/>
    <property type="molecule type" value="Genomic_DNA"/>
</dbReference>
<dbReference type="PIR" id="A22133">
    <property type="entry name" value="PSECA1"/>
</dbReference>
<dbReference type="RefSeq" id="NP_418265.1">
    <property type="nucleotide sequence ID" value="NC_000913.3"/>
</dbReference>
<dbReference type="RefSeq" id="WP_001259700.1">
    <property type="nucleotide sequence ID" value="NZ_SSZK01000046.1"/>
</dbReference>
<dbReference type="PDB" id="1FW2">
    <property type="method" value="X-ray"/>
    <property type="resolution" value="2.60 A"/>
    <property type="chains" value="A=21-289"/>
</dbReference>
<dbReference type="PDB" id="1FW3">
    <property type="method" value="X-ray"/>
    <property type="resolution" value="2.80 A"/>
    <property type="chains" value="A/B=21-289"/>
</dbReference>
<dbReference type="PDB" id="1ILD">
    <property type="method" value="X-ray"/>
    <property type="resolution" value="2.80 A"/>
    <property type="chains" value="A=21-289"/>
</dbReference>
<dbReference type="PDB" id="1ILZ">
    <property type="method" value="X-ray"/>
    <property type="resolution" value="2.50 A"/>
    <property type="chains" value="A=21-289"/>
</dbReference>
<dbReference type="PDB" id="1IM0">
    <property type="method" value="X-ray"/>
    <property type="resolution" value="2.98 A"/>
    <property type="chains" value="A=21-289"/>
</dbReference>
<dbReference type="PDB" id="1QD5">
    <property type="method" value="X-ray"/>
    <property type="resolution" value="2.17 A"/>
    <property type="chains" value="A=21-289"/>
</dbReference>
<dbReference type="PDB" id="1QD6">
    <property type="method" value="X-ray"/>
    <property type="resolution" value="2.10 A"/>
    <property type="chains" value="A/B=33-45, C/D=50-289"/>
</dbReference>
<dbReference type="PDB" id="6LYQ">
    <property type="method" value="X-ray"/>
    <property type="resolution" value="3.19 A"/>
    <property type="chains" value="O=274-289"/>
</dbReference>
<dbReference type="PDBsum" id="1FW2"/>
<dbReference type="PDBsum" id="1FW3"/>
<dbReference type="PDBsum" id="1ILD"/>
<dbReference type="PDBsum" id="1ILZ"/>
<dbReference type="PDBsum" id="1IM0"/>
<dbReference type="PDBsum" id="1QD5"/>
<dbReference type="PDBsum" id="1QD6"/>
<dbReference type="PDBsum" id="6LYQ"/>
<dbReference type="SMR" id="P0A921"/>
<dbReference type="BioGRID" id="4259303">
    <property type="interactions" value="286"/>
</dbReference>
<dbReference type="FunCoup" id="P0A921">
    <property type="interactions" value="123"/>
</dbReference>
<dbReference type="IntAct" id="P0A921">
    <property type="interactions" value="12"/>
</dbReference>
<dbReference type="STRING" id="511145.b3821"/>
<dbReference type="DrugBank" id="DB03692">
    <property type="generic name" value="1-Hexadecanosulfonyl-O-L-Serine"/>
</dbReference>
<dbReference type="jPOST" id="P0A921"/>
<dbReference type="PaxDb" id="511145-b3821"/>
<dbReference type="EnsemblBacteria" id="AAC76824">
    <property type="protein sequence ID" value="AAC76824"/>
    <property type="gene ID" value="b3821"/>
</dbReference>
<dbReference type="GeneID" id="75204815"/>
<dbReference type="GeneID" id="948307"/>
<dbReference type="KEGG" id="ecj:JW3794"/>
<dbReference type="KEGG" id="eco:b3821"/>
<dbReference type="KEGG" id="ecoc:C3026_20680"/>
<dbReference type="PATRIC" id="fig|1411691.4.peg.2886"/>
<dbReference type="EchoBASE" id="EB0731"/>
<dbReference type="eggNOG" id="COG2829">
    <property type="taxonomic scope" value="Bacteria"/>
</dbReference>
<dbReference type="HOGENOM" id="CLU_045813_1_0_6"/>
<dbReference type="InParanoid" id="P0A921"/>
<dbReference type="OMA" id="DVRWGGC"/>
<dbReference type="OrthoDB" id="188433at2"/>
<dbReference type="PhylomeDB" id="P0A921"/>
<dbReference type="BioCyc" id="EcoCyc:MONOMER0-341"/>
<dbReference type="BioCyc" id="MetaCyc:MONOMER0-341"/>
<dbReference type="EvolutionaryTrace" id="P0A921"/>
<dbReference type="PRO" id="PR:P0A921"/>
<dbReference type="Proteomes" id="UP000000625">
    <property type="component" value="Chromosome"/>
</dbReference>
<dbReference type="GO" id="GO:0009279">
    <property type="term" value="C:cell outer membrane"/>
    <property type="evidence" value="ECO:0000314"/>
    <property type="project" value="UniProtKB"/>
</dbReference>
<dbReference type="GO" id="GO:0005509">
    <property type="term" value="F:calcium ion binding"/>
    <property type="evidence" value="ECO:0000314"/>
    <property type="project" value="UniProtKB"/>
</dbReference>
<dbReference type="GO" id="GO:0004622">
    <property type="term" value="F:lysophospholipase activity"/>
    <property type="evidence" value="ECO:0000314"/>
    <property type="project" value="EcoCyc"/>
</dbReference>
<dbReference type="GO" id="GO:0008970">
    <property type="term" value="F:phospholipase A1 activity"/>
    <property type="evidence" value="ECO:0000304"/>
    <property type="project" value="UniProtKB"/>
</dbReference>
<dbReference type="GO" id="GO:0004623">
    <property type="term" value="F:phospholipase A2 activity"/>
    <property type="evidence" value="ECO:0000314"/>
    <property type="project" value="EcoCyc"/>
</dbReference>
<dbReference type="GO" id="GO:0004620">
    <property type="term" value="F:phospholipase activity"/>
    <property type="evidence" value="ECO:0000314"/>
    <property type="project" value="EcoCyc"/>
</dbReference>
<dbReference type="GO" id="GO:0042803">
    <property type="term" value="F:protein homodimerization activity"/>
    <property type="evidence" value="ECO:0000314"/>
    <property type="project" value="UniProtKB"/>
</dbReference>
<dbReference type="GO" id="GO:0016042">
    <property type="term" value="P:lipid catabolic process"/>
    <property type="evidence" value="ECO:0007669"/>
    <property type="project" value="UniProtKB-KW"/>
</dbReference>
<dbReference type="GO" id="GO:0046471">
    <property type="term" value="P:phosphatidylglycerol metabolic process"/>
    <property type="evidence" value="ECO:0000314"/>
    <property type="project" value="EcoCyc"/>
</dbReference>
<dbReference type="CDD" id="cd00541">
    <property type="entry name" value="OMPLA"/>
    <property type="match status" value="1"/>
</dbReference>
<dbReference type="FunFam" id="2.40.230.10:FF:000001">
    <property type="entry name" value="Phospholipase A(1)"/>
    <property type="match status" value="1"/>
</dbReference>
<dbReference type="Gene3D" id="2.40.230.10">
    <property type="entry name" value="Phospholipase A1"/>
    <property type="match status" value="1"/>
</dbReference>
<dbReference type="InterPro" id="IPR003187">
    <property type="entry name" value="PLipase_A1"/>
</dbReference>
<dbReference type="InterPro" id="IPR036541">
    <property type="entry name" value="PLipase_A1_sf"/>
</dbReference>
<dbReference type="NCBIfam" id="NF008031">
    <property type="entry name" value="PRK10763.1"/>
    <property type="match status" value="1"/>
</dbReference>
<dbReference type="PANTHER" id="PTHR40457">
    <property type="entry name" value="PHOSPHOLIPASE A1"/>
    <property type="match status" value="1"/>
</dbReference>
<dbReference type="PANTHER" id="PTHR40457:SF1">
    <property type="entry name" value="PHOSPHOLIPASE A1"/>
    <property type="match status" value="1"/>
</dbReference>
<dbReference type="Pfam" id="PF02253">
    <property type="entry name" value="PLA1"/>
    <property type="match status" value="1"/>
</dbReference>
<dbReference type="PRINTS" id="PR01486">
    <property type="entry name" value="PHPHLIPASEA1"/>
</dbReference>
<dbReference type="SUPFAM" id="SSF56931">
    <property type="entry name" value="Outer membrane phospholipase A (OMPLA)"/>
    <property type="match status" value="1"/>
</dbReference>
<gene>
    <name type="primary">pldA</name>
    <name type="ordered locus">b3821</name>
    <name type="ordered locus">JW3794</name>
</gene>
<keyword id="KW-0002">3D-structure</keyword>
<keyword id="KW-0106">Calcium</keyword>
<keyword id="KW-0998">Cell outer membrane</keyword>
<keyword id="KW-0903">Direct protein sequencing</keyword>
<keyword id="KW-0378">Hydrolase</keyword>
<keyword id="KW-0442">Lipid degradation</keyword>
<keyword id="KW-0443">Lipid metabolism</keyword>
<keyword id="KW-0472">Membrane</keyword>
<keyword id="KW-0479">Metal-binding</keyword>
<keyword id="KW-1185">Reference proteome</keyword>
<keyword id="KW-0732">Signal</keyword>
<keyword id="KW-0812">Transmembrane</keyword>
<keyword id="KW-1134">Transmembrane beta strand</keyword>
<reference key="1">
    <citation type="journal article" date="1984" name="J. Biochem.">
        <title>The DNA sequence encoding pldA gene, the structural gene for detergent-resistant phospholipase A of E. coli.</title>
        <authorList>
            <person name="Homma H."/>
            <person name="Kobayashi T."/>
            <person name="Chiba N."/>
            <person name="Karasawa K."/>
            <person name="Mizushima H."/>
            <person name="Kudo I."/>
            <person name="Inoue K."/>
            <person name="Ikeda H."/>
            <person name="Sekiguchi M."/>
            <person name="Nojima S."/>
        </authorList>
    </citation>
    <scope>NUCLEOTIDE SEQUENCE [GENOMIC DNA]</scope>
    <scope>PROTEIN SEQUENCE OF 21-30</scope>
    <source>
        <strain>K12</strain>
    </source>
</reference>
<reference key="2">
    <citation type="journal article" date="1992" name="Science">
        <title>Analysis of the Escherichia coli genome: DNA sequence of the region from 84.5 to 86.5 minutes.</title>
        <authorList>
            <person name="Daniels D.L."/>
            <person name="Plunkett G. III"/>
            <person name="Burland V.D."/>
            <person name="Blattner F.R."/>
        </authorList>
    </citation>
    <scope>NUCLEOTIDE SEQUENCE [LARGE SCALE GENOMIC DNA]</scope>
    <source>
        <strain>K12 / MG1655 / ATCC 47076</strain>
    </source>
</reference>
<reference key="3">
    <citation type="journal article" date="1997" name="Science">
        <title>The complete genome sequence of Escherichia coli K-12.</title>
        <authorList>
            <person name="Blattner F.R."/>
            <person name="Plunkett G. III"/>
            <person name="Bloch C.A."/>
            <person name="Perna N.T."/>
            <person name="Burland V."/>
            <person name="Riley M."/>
            <person name="Collado-Vides J."/>
            <person name="Glasner J.D."/>
            <person name="Rode C.K."/>
            <person name="Mayhew G.F."/>
            <person name="Gregor J."/>
            <person name="Davis N.W."/>
            <person name="Kirkpatrick H.A."/>
            <person name="Goeden M.A."/>
            <person name="Rose D.J."/>
            <person name="Mau B."/>
            <person name="Shao Y."/>
        </authorList>
    </citation>
    <scope>NUCLEOTIDE SEQUENCE [LARGE SCALE GENOMIC DNA]</scope>
    <scope>SEQUENCE REVISION TO 14-15</scope>
    <source>
        <strain>K12 / MG1655 / ATCC 47076</strain>
    </source>
</reference>
<reference key="4">
    <citation type="journal article" date="2006" name="Mol. Syst. Biol.">
        <title>Highly accurate genome sequences of Escherichia coli K-12 strains MG1655 and W3110.</title>
        <authorList>
            <person name="Hayashi K."/>
            <person name="Morooka N."/>
            <person name="Yamamoto Y."/>
            <person name="Fujita K."/>
            <person name="Isono K."/>
            <person name="Choi S."/>
            <person name="Ohtsubo E."/>
            <person name="Baba T."/>
            <person name="Wanner B.L."/>
            <person name="Mori H."/>
            <person name="Horiuchi T."/>
        </authorList>
    </citation>
    <scope>NUCLEOTIDE SEQUENCE [LARGE SCALE GENOMIC DNA]</scope>
    <source>
        <strain>K12 / W3110 / ATCC 27325 / DSM 5911</strain>
    </source>
</reference>
<reference key="5">
    <citation type="journal article" date="1995" name="Eur. J. Biochem.">
        <title>In vitro folding of Escherichia coli outer-membrane phospholipase A.</title>
        <authorList>
            <person name="Dekker N."/>
            <person name="Merck K."/>
            <person name="Tommassen J."/>
            <person name="Verheij H.M."/>
        </authorList>
    </citation>
    <scope>PROTEIN SEQUENCE OF 21-24</scope>
    <source>
        <strain>K12</strain>
    </source>
</reference>
<reference key="6">
    <citation type="journal article" date="1984" name="EMBO J.">
        <title>The pro- and mature forms of the E. coli K-12 outer membrane phospholipase A are identical.</title>
        <authorList>
            <person name="de Geus P."/>
            <person name="Verheij H.M."/>
            <person name="Riegman N.H."/>
            <person name="Hoekstra W.P.M."/>
            <person name="de Haas G.H."/>
        </authorList>
    </citation>
    <scope>NUCLEOTIDE SEQUENCE [GENOMIC DNA] OF 30-289</scope>
    <source>
        <strain>K12</strain>
    </source>
</reference>
<reference key="7">
    <citation type="journal article" date="1986" name="Mol. Gen. Genet.">
        <title>The recQ gene of Escherichia coli K12: primary structure and evidence for SOS regulation.</title>
        <authorList>
            <person name="Irino N."/>
            <person name="Nakayama K."/>
            <person name="Nakayama H."/>
        </authorList>
    </citation>
    <scope>NUCLEOTIDE SEQUENCE [GENOMIC DNA] OF 174-289</scope>
    <source>
        <strain>K12</strain>
    </source>
</reference>
<reference key="8">
    <citation type="journal article" date="1984" name="J. Biochem.">
        <title>Characteristics of detergent-resistant phospholipase A overproduced in E. coli cells bearing its cloned structural gene.</title>
        <authorList>
            <person name="Homma H."/>
            <person name="Chiba N."/>
            <person name="Kobayashi T."/>
            <person name="Kudo I."/>
            <person name="Inoue K."/>
            <person name="Ikeda H."/>
            <person name="Sekiguchi M."/>
            <person name="Nojima S."/>
        </authorList>
    </citation>
    <scope>SUBCELLULAR LOCATION</scope>
    <source>
        <strain>K12</strain>
    </source>
</reference>
<reference key="9">
    <citation type="journal article" date="1994" name="J. Bacteriol.">
        <title>Molecular characterization of enterobacterial pldA genes encoding outer membrane phospholipase A.</title>
        <authorList>
            <person name="Brok R.G.P.M."/>
            <person name="Brinkman E."/>
            <person name="van Boxtel R."/>
            <person name="Bekkers A.C.A.P."/>
            <person name="Verheij H.M."/>
            <person name="Tommassen J."/>
        </authorList>
    </citation>
    <scope>MUTAGENESIS OF SER-172</scope>
</reference>
<reference key="10">
    <citation type="journal article" date="1991" name="Eur. J. Biochem.">
        <title>Inactivation of Escherichia coli outer-membrane phospholipase A by the affinity label hexadecanesulfonyl fluoride. Evidence for an active-site serine.</title>
        <authorList>
            <person name="Horrevoets A.J.G."/>
            <person name="Verheij H.M."/>
            <person name="de Haas G.H."/>
        </authorList>
    </citation>
    <scope>ACTIVE SITE SER-164</scope>
    <scope>PARTIAL PROTEIN SEQUENCE</scope>
</reference>
<reference key="11">
    <citation type="journal article" date="1997" name="J. Biol. Chem.">
        <title>Dimerization regulates the enzymatic activity of Escherichia coli outer membrane phospholipase A.</title>
        <authorList>
            <person name="Dekker N."/>
            <person name="Tommassen J."/>
            <person name="Lustig A."/>
            <person name="Rosenbusch J.P."/>
            <person name="Verheij H.M."/>
        </authorList>
    </citation>
    <scope>SUBUNIT</scope>
    <scope>ACTIVITY REGULATION</scope>
</reference>
<reference key="12">
    <citation type="journal article" date="1999" name="J. Bacteriol.">
        <title>Bacteriocin release protein triggers dimerization of outer membrane phospholipase A in vivo.</title>
        <authorList>
            <person name="Dekker N."/>
            <person name="Tommassen J."/>
            <person name="Verheij H.M."/>
        </authorList>
    </citation>
    <scope>SUBUNIT</scope>
    <scope>ACTIVITY REGULATION</scope>
</reference>
<reference key="13">
    <citation type="journal article" date="1999" name="Nature">
        <title>Structural evidence for dimerization-regulated activation of an integral membrane phospholipase.</title>
        <authorList>
            <person name="Snijder H.J."/>
            <person name="Ubarretxena-Belandia I."/>
            <person name="Blaauw M."/>
            <person name="Kalk K.H."/>
            <person name="Verheij H.M."/>
            <person name="Egmond M.R."/>
            <person name="Dekker N."/>
            <person name="Dijkstra B.W."/>
        </authorList>
    </citation>
    <scope>X-RAY CRYSTALLOGRAPHY (2.1 ANGSTROMS) OF 33-289 IN MONOMERIC AND DIMERIC FORM</scope>
    <scope>COFACTOR</scope>
    <scope>SUBUNIT</scope>
</reference>
<reference key="14">
    <citation type="journal article" date="2001" name="J. Mol. Biol.">
        <title>Structural investigations of calcium binding and its role in activity and activation of outer membrane phospholipase A from Escherichia coli.</title>
        <authorList>
            <person name="Snijder H.J."/>
            <person name="Kingma R.L."/>
            <person name="Kalk K.H."/>
            <person name="Dekker N."/>
            <person name="Egmond M.R."/>
            <person name="Dijkstra B.W."/>
        </authorList>
    </citation>
    <scope>X-RAY CRYSTALLOGRAPHY (2.6 ANGSTROMS) OF 21-289 IN MONOMERIC AND DIMERIC FORM IN THE PRESENCE AND ABSENCE OF CALCIUM</scope>
</reference>
<reference key="15">
    <citation type="journal article" date="2001" name="Protein Sci.">
        <title>Structural investigations of the active-site mutant Asn156Ala of outer membrane phospholipase A: function of the Asn-His interaction in the catalytic triad.</title>
        <authorList>
            <person name="Snijder H.J."/>
            <person name="Van Eerde J.H."/>
            <person name="Kingma R.L."/>
            <person name="Kalk K.H."/>
            <person name="Dekker N."/>
            <person name="Egmond M.R."/>
            <person name="Dijkstra B.W."/>
        </authorList>
    </citation>
    <scope>X-RAY CRYSTALLOGRAPHY (2.8 ANGSTROMS) OF 21-289 OF MUTANT ALA-156</scope>
</reference>
<evidence type="ECO:0000269" key="1">
    <source>
    </source>
</evidence>
<evidence type="ECO:0000269" key="2">
    <source>
    </source>
</evidence>
<evidence type="ECO:0000269" key="3">
    <source>
    </source>
</evidence>
<evidence type="ECO:0000269" key="4">
    <source>
    </source>
</evidence>
<evidence type="ECO:0000269" key="5">
    <source>
    </source>
</evidence>
<evidence type="ECO:0000269" key="6">
    <source>
    </source>
</evidence>
<evidence type="ECO:0000269" key="7">
    <source>
    </source>
</evidence>
<evidence type="ECO:0000269" key="8">
    <source>
    </source>
</evidence>
<evidence type="ECO:0000305" key="9"/>
<evidence type="ECO:0007829" key="10">
    <source>
        <dbReference type="PDB" id="1ILZ"/>
    </source>
</evidence>
<evidence type="ECO:0007829" key="11">
    <source>
        <dbReference type="PDB" id="1QD6"/>
    </source>
</evidence>
<feature type="signal peptide" evidence="5 6">
    <location>
        <begin position="1"/>
        <end position="20"/>
    </location>
</feature>
<feature type="chain" id="PRO_0000021983" description="Phospholipase A1">
    <location>
        <begin position="21"/>
        <end position="289"/>
    </location>
</feature>
<feature type="topological domain" description="Periplasmic">
    <location>
        <begin position="21"/>
        <end position="52"/>
    </location>
</feature>
<feature type="transmembrane region" description="Beta stranded">
    <location>
        <begin position="53"/>
        <end position="65"/>
    </location>
</feature>
<feature type="topological domain" description="Extracellular">
    <location>
        <begin position="66"/>
        <end position="84"/>
    </location>
</feature>
<feature type="transmembrane region" description="Beta stranded">
    <location>
        <begin position="85"/>
        <end position="99"/>
    </location>
</feature>
<feature type="topological domain" description="Periplasmic">
    <location>
        <begin position="100"/>
        <end position="105"/>
    </location>
</feature>
<feature type="transmembrane region" description="Beta stranded">
    <location>
        <begin position="106"/>
        <end position="118"/>
    </location>
</feature>
<feature type="topological domain" description="Extracellular">
    <location>
        <begin position="119"/>
        <end position="128"/>
    </location>
</feature>
<feature type="transmembrane region" description="Beta stranded">
    <location>
        <begin position="129"/>
        <end position="148"/>
    </location>
</feature>
<feature type="topological domain" description="Periplasmic">
    <location>
        <begin position="149"/>
        <end position="150"/>
    </location>
</feature>
<feature type="transmembrane region" description="Beta stranded">
    <location>
        <begin position="151"/>
        <end position="164"/>
    </location>
</feature>
<feature type="topological domain" description="Extracellular">
    <location>
        <begin position="165"/>
        <end position="173"/>
    </location>
</feature>
<feature type="transmembrane region" description="Beta stranded">
    <location>
        <begin position="174"/>
        <end position="186"/>
    </location>
</feature>
<feature type="topological domain" description="Periplasmic">
    <location>
        <begin position="187"/>
        <end position="188"/>
    </location>
</feature>
<feature type="transmembrane region" description="Beta stranded">
    <location>
        <begin position="189"/>
        <end position="198"/>
    </location>
</feature>
<feature type="topological domain" description="Extracellular">
    <location>
        <begin position="199"/>
        <end position="216"/>
    </location>
</feature>
<feature type="transmembrane region" description="Beta stranded">
    <location>
        <begin position="217"/>
        <end position="223"/>
    </location>
</feature>
<feature type="topological domain" description="Periplasmic">
    <location>
        <begin position="224"/>
        <end position="225"/>
    </location>
</feature>
<feature type="transmembrane region" description="Beta stranded">
    <location>
        <begin position="226"/>
        <end position="234"/>
    </location>
</feature>
<feature type="topological domain" description="Extracellular">
    <location>
        <begin position="235"/>
        <end position="241"/>
    </location>
</feature>
<feature type="transmembrane region" description="Beta stranded">
    <location>
        <begin position="242"/>
        <end position="250"/>
    </location>
</feature>
<feature type="topological domain" description="Periplasmic">
    <location>
        <begin position="251"/>
        <end position="255"/>
    </location>
</feature>
<feature type="transmembrane region" description="Beta stranded">
    <location>
        <begin position="256"/>
        <end position="265"/>
    </location>
</feature>
<feature type="topological domain" description="Extracellular">
    <location>
        <begin position="266"/>
        <end position="274"/>
    </location>
</feature>
<feature type="transmembrane region" description="Beta stranded">
    <location>
        <begin position="275"/>
        <end position="286"/>
    </location>
</feature>
<feature type="topological domain" description="Periplasmic">
    <location>
        <begin position="287"/>
        <end position="289"/>
    </location>
</feature>
<feature type="active site" description="Proton acceptor" evidence="9">
    <location>
        <position position="162"/>
    </location>
</feature>
<feature type="active site" description="Nucleophile" evidence="3">
    <location>
        <position position="164"/>
    </location>
</feature>
<feature type="binding site" description="in dimeric form">
    <location>
        <position position="126"/>
    </location>
    <ligand>
        <name>Ca(2+)</name>
        <dbReference type="ChEBI" id="CHEBI:29108"/>
        <label>1</label>
    </ligand>
</feature>
<feature type="binding site" description="in dimeric form">
    <location>
        <position position="167"/>
    </location>
    <ligand>
        <name>Ca(2+)</name>
        <dbReference type="ChEBI" id="CHEBI:29108"/>
        <label>2</label>
    </ligand>
</feature>
<feature type="binding site" description="in dimeric form">
    <location>
        <position position="172"/>
    </location>
    <ligand>
        <name>Ca(2+)</name>
        <dbReference type="ChEBI" id="CHEBI:29108"/>
        <label>2</label>
    </ligand>
</feature>
<feature type="binding site" description="in monomeric form">
    <location>
        <position position="204"/>
    </location>
    <ligand>
        <name>Ca(2+)</name>
        <dbReference type="ChEBI" id="CHEBI:29108"/>
        <label>3</label>
    </ligand>
</feature>
<feature type="mutagenesis site" description="Inactive protein." evidence="7">
    <original>S</original>
    <variation>F</variation>
    <location>
        <position position="172"/>
    </location>
</feature>
<feature type="sequence conflict" description="In Ref. 2; AAA67617." evidence="9" ref="2">
    <original>LP</original>
    <variation>FA</variation>
    <location>
        <begin position="14"/>
        <end position="15"/>
    </location>
</feature>
<feature type="sequence conflict" description="In Ref. 6." evidence="9" ref="6">
    <original>DAPA</original>
    <variation>MTRQ</variation>
    <location>
        <begin position="30"/>
        <end position="33"/>
    </location>
</feature>
<feature type="helix" evidence="11">
    <location>
        <begin position="38"/>
        <end position="43"/>
    </location>
</feature>
<feature type="strand" evidence="11">
    <location>
        <begin position="52"/>
        <end position="54"/>
    </location>
</feature>
<feature type="strand" evidence="11">
    <location>
        <begin position="59"/>
        <end position="67"/>
    </location>
</feature>
<feature type="turn" evidence="11">
    <location>
        <begin position="70"/>
        <end position="75"/>
    </location>
</feature>
<feature type="helix" evidence="11">
    <location>
        <begin position="77"/>
        <end position="81"/>
    </location>
</feature>
<feature type="strand" evidence="11">
    <location>
        <begin position="84"/>
        <end position="99"/>
    </location>
</feature>
<feature type="turn" evidence="11">
    <location>
        <begin position="100"/>
        <end position="102"/>
    </location>
</feature>
<feature type="strand" evidence="11">
    <location>
        <begin position="106"/>
        <end position="118"/>
    </location>
</feature>
<feature type="helix" evidence="11">
    <location>
        <begin position="123"/>
        <end position="125"/>
    </location>
</feature>
<feature type="strand" evidence="11">
    <location>
        <begin position="129"/>
        <end position="148"/>
    </location>
</feature>
<feature type="strand" evidence="11">
    <location>
        <begin position="151"/>
        <end position="164"/>
    </location>
</feature>
<feature type="strand" evidence="10">
    <location>
        <begin position="169"/>
        <end position="171"/>
    </location>
</feature>
<feature type="strand" evidence="11">
    <location>
        <begin position="174"/>
        <end position="186"/>
    </location>
</feature>
<feature type="strand" evidence="11">
    <location>
        <begin position="189"/>
        <end position="200"/>
    </location>
</feature>
<feature type="helix" evidence="11">
    <location>
        <begin position="208"/>
        <end position="212"/>
    </location>
</feature>
<feature type="strand" evidence="11">
    <location>
        <begin position="214"/>
        <end position="223"/>
    </location>
</feature>
<feature type="strand" evidence="11">
    <location>
        <begin position="226"/>
        <end position="234"/>
    </location>
</feature>
<feature type="turn" evidence="11">
    <location>
        <begin position="236"/>
        <end position="238"/>
    </location>
</feature>
<feature type="strand" evidence="11">
    <location>
        <begin position="241"/>
        <end position="252"/>
    </location>
</feature>
<feature type="strand" evidence="11">
    <location>
        <begin position="255"/>
        <end position="265"/>
    </location>
</feature>
<feature type="helix" evidence="11">
    <location>
        <begin position="269"/>
        <end position="271"/>
    </location>
</feature>
<feature type="strand" evidence="11">
    <location>
        <begin position="275"/>
        <end position="285"/>
    </location>
</feature>
<name>PA1_ECOLI</name>
<organism>
    <name type="scientific">Escherichia coli (strain K12)</name>
    <dbReference type="NCBI Taxonomy" id="83333"/>
    <lineage>
        <taxon>Bacteria</taxon>
        <taxon>Pseudomonadati</taxon>
        <taxon>Pseudomonadota</taxon>
        <taxon>Gammaproteobacteria</taxon>
        <taxon>Enterobacterales</taxon>
        <taxon>Enterobacteriaceae</taxon>
        <taxon>Escherichia</taxon>
    </lineage>
</organism>